<organism>
    <name type="scientific">Bacillus subtilis (strain 168)</name>
    <dbReference type="NCBI Taxonomy" id="224308"/>
    <lineage>
        <taxon>Bacteria</taxon>
        <taxon>Bacillati</taxon>
        <taxon>Bacillota</taxon>
        <taxon>Bacilli</taxon>
        <taxon>Bacillales</taxon>
        <taxon>Bacillaceae</taxon>
        <taxon>Bacillus</taxon>
    </lineage>
</organism>
<feature type="chain" id="PRO_0000050073" description="Uncharacterized protein YycD">
    <location>
        <begin position="1"/>
        <end position="66"/>
    </location>
</feature>
<name>YYCD_BACSU</name>
<accession>P37480</accession>
<proteinExistence type="predicted"/>
<keyword id="KW-1185">Reference proteome</keyword>
<dbReference type="EMBL" id="D26185">
    <property type="protein sequence ID" value="BAA05177.1"/>
    <property type="molecule type" value="Genomic_DNA"/>
</dbReference>
<dbReference type="EMBL" id="AL009126">
    <property type="protein sequence ID" value="CAB16082.1"/>
    <property type="molecule type" value="Genomic_DNA"/>
</dbReference>
<dbReference type="PIR" id="S65971">
    <property type="entry name" value="S65971"/>
</dbReference>
<dbReference type="RefSeq" id="NP_391925.1">
    <property type="nucleotide sequence ID" value="NC_000964.3"/>
</dbReference>
<dbReference type="RefSeq" id="WP_003226922.1">
    <property type="nucleotide sequence ID" value="NZ_OZ025638.1"/>
</dbReference>
<dbReference type="SMR" id="P37480"/>
<dbReference type="FunCoup" id="P37480">
    <property type="interactions" value="214"/>
</dbReference>
<dbReference type="STRING" id="224308.BSU40450"/>
<dbReference type="PaxDb" id="224308-BSU40450"/>
<dbReference type="EnsemblBacteria" id="CAB16082">
    <property type="protein sequence ID" value="CAB16082"/>
    <property type="gene ID" value="BSU_40450"/>
</dbReference>
<dbReference type="GeneID" id="937781"/>
<dbReference type="KEGG" id="bsu:BSU40450"/>
<dbReference type="PATRIC" id="fig|224308.179.peg.4379"/>
<dbReference type="eggNOG" id="ENOG50337BX">
    <property type="taxonomic scope" value="Bacteria"/>
</dbReference>
<dbReference type="InParanoid" id="P37480"/>
<dbReference type="OrthoDB" id="2428875at2"/>
<dbReference type="BioCyc" id="BSUB:BSU40450-MONOMER"/>
<dbReference type="Proteomes" id="UP000001570">
    <property type="component" value="Chromosome"/>
</dbReference>
<dbReference type="InterPro" id="IPR018691">
    <property type="entry name" value="DUF2188"/>
</dbReference>
<dbReference type="Pfam" id="PF09954">
    <property type="entry name" value="DUF2188"/>
    <property type="match status" value="1"/>
</dbReference>
<protein>
    <recommendedName>
        <fullName>Uncharacterized protein YycD</fullName>
    </recommendedName>
</protein>
<gene>
    <name type="primary">yycD</name>
    <name type="ordered locus">BSU40450</name>
</gene>
<sequence length="66" mass="7461">MIKKYAITPNVDADGWFIEVENVAPTALYTSKDAAIEKAKQVAKENSPSKLVIYDQFKNVEEEHSF</sequence>
<reference key="1">
    <citation type="journal article" date="1994" name="DNA Res.">
        <title>Systematic sequencing of the 180 kilobase region of the Bacillus subtilis chromosome containing the replication origin.</title>
        <authorList>
            <person name="Ogasawara N."/>
            <person name="Nakai S."/>
            <person name="Yoshikawa H."/>
        </authorList>
    </citation>
    <scope>NUCLEOTIDE SEQUENCE [GENOMIC DNA]</scope>
    <source>
        <strain>168</strain>
    </source>
</reference>
<reference key="2">
    <citation type="journal article" date="1997" name="Nature">
        <title>The complete genome sequence of the Gram-positive bacterium Bacillus subtilis.</title>
        <authorList>
            <person name="Kunst F."/>
            <person name="Ogasawara N."/>
            <person name="Moszer I."/>
            <person name="Albertini A.M."/>
            <person name="Alloni G."/>
            <person name="Azevedo V."/>
            <person name="Bertero M.G."/>
            <person name="Bessieres P."/>
            <person name="Bolotin A."/>
            <person name="Borchert S."/>
            <person name="Borriss R."/>
            <person name="Boursier L."/>
            <person name="Brans A."/>
            <person name="Braun M."/>
            <person name="Brignell S.C."/>
            <person name="Bron S."/>
            <person name="Brouillet S."/>
            <person name="Bruschi C.V."/>
            <person name="Caldwell B."/>
            <person name="Capuano V."/>
            <person name="Carter N.M."/>
            <person name="Choi S.-K."/>
            <person name="Codani J.-J."/>
            <person name="Connerton I.F."/>
            <person name="Cummings N.J."/>
            <person name="Daniel R.A."/>
            <person name="Denizot F."/>
            <person name="Devine K.M."/>
            <person name="Duesterhoeft A."/>
            <person name="Ehrlich S.D."/>
            <person name="Emmerson P.T."/>
            <person name="Entian K.-D."/>
            <person name="Errington J."/>
            <person name="Fabret C."/>
            <person name="Ferrari E."/>
            <person name="Foulger D."/>
            <person name="Fritz C."/>
            <person name="Fujita M."/>
            <person name="Fujita Y."/>
            <person name="Fuma S."/>
            <person name="Galizzi A."/>
            <person name="Galleron N."/>
            <person name="Ghim S.-Y."/>
            <person name="Glaser P."/>
            <person name="Goffeau A."/>
            <person name="Golightly E.J."/>
            <person name="Grandi G."/>
            <person name="Guiseppi G."/>
            <person name="Guy B.J."/>
            <person name="Haga K."/>
            <person name="Haiech J."/>
            <person name="Harwood C.R."/>
            <person name="Henaut A."/>
            <person name="Hilbert H."/>
            <person name="Holsappel S."/>
            <person name="Hosono S."/>
            <person name="Hullo M.-F."/>
            <person name="Itaya M."/>
            <person name="Jones L.-M."/>
            <person name="Joris B."/>
            <person name="Karamata D."/>
            <person name="Kasahara Y."/>
            <person name="Klaerr-Blanchard M."/>
            <person name="Klein C."/>
            <person name="Kobayashi Y."/>
            <person name="Koetter P."/>
            <person name="Koningstein G."/>
            <person name="Krogh S."/>
            <person name="Kumano M."/>
            <person name="Kurita K."/>
            <person name="Lapidus A."/>
            <person name="Lardinois S."/>
            <person name="Lauber J."/>
            <person name="Lazarevic V."/>
            <person name="Lee S.-M."/>
            <person name="Levine A."/>
            <person name="Liu H."/>
            <person name="Masuda S."/>
            <person name="Mauel C."/>
            <person name="Medigue C."/>
            <person name="Medina N."/>
            <person name="Mellado R.P."/>
            <person name="Mizuno M."/>
            <person name="Moestl D."/>
            <person name="Nakai S."/>
            <person name="Noback M."/>
            <person name="Noone D."/>
            <person name="O'Reilly M."/>
            <person name="Ogawa K."/>
            <person name="Ogiwara A."/>
            <person name="Oudega B."/>
            <person name="Park S.-H."/>
            <person name="Parro V."/>
            <person name="Pohl T.M."/>
            <person name="Portetelle D."/>
            <person name="Porwollik S."/>
            <person name="Prescott A.M."/>
            <person name="Presecan E."/>
            <person name="Pujic P."/>
            <person name="Purnelle B."/>
            <person name="Rapoport G."/>
            <person name="Rey M."/>
            <person name="Reynolds S."/>
            <person name="Rieger M."/>
            <person name="Rivolta C."/>
            <person name="Rocha E."/>
            <person name="Roche B."/>
            <person name="Rose M."/>
            <person name="Sadaie Y."/>
            <person name="Sato T."/>
            <person name="Scanlan E."/>
            <person name="Schleich S."/>
            <person name="Schroeter R."/>
            <person name="Scoffone F."/>
            <person name="Sekiguchi J."/>
            <person name="Sekowska A."/>
            <person name="Seror S.J."/>
            <person name="Serror P."/>
            <person name="Shin B.-S."/>
            <person name="Soldo B."/>
            <person name="Sorokin A."/>
            <person name="Tacconi E."/>
            <person name="Takagi T."/>
            <person name="Takahashi H."/>
            <person name="Takemaru K."/>
            <person name="Takeuchi M."/>
            <person name="Tamakoshi A."/>
            <person name="Tanaka T."/>
            <person name="Terpstra P."/>
            <person name="Tognoni A."/>
            <person name="Tosato V."/>
            <person name="Uchiyama S."/>
            <person name="Vandenbol M."/>
            <person name="Vannier F."/>
            <person name="Vassarotti A."/>
            <person name="Viari A."/>
            <person name="Wambutt R."/>
            <person name="Wedler E."/>
            <person name="Wedler H."/>
            <person name="Weitzenegger T."/>
            <person name="Winters P."/>
            <person name="Wipat A."/>
            <person name="Yamamoto H."/>
            <person name="Yamane K."/>
            <person name="Yasumoto K."/>
            <person name="Yata K."/>
            <person name="Yoshida K."/>
            <person name="Yoshikawa H.-F."/>
            <person name="Zumstein E."/>
            <person name="Yoshikawa H."/>
            <person name="Danchin A."/>
        </authorList>
    </citation>
    <scope>NUCLEOTIDE SEQUENCE [LARGE SCALE GENOMIC DNA]</scope>
    <source>
        <strain>168</strain>
    </source>
</reference>